<sequence length="486" mass="52388">MDLSAKDEFSAEKRNPDNYDSVNNPSGDWRVDSYPSENLISAGPASCSPSQMMDSFGQTLWYDPTSVQAVGYAGFNGGNASSSSFRGSIDRSLEMGWNLPNLLPPKGNGLFLPNASSFLPPSMAQFPADSGFIERAARFSLFSGGNFSDMVNQPLGNSEAIGLFLQGGGTMQGQCQSNELNVGEPHNDVSVAVKESTVRSSEQAKPNVPGSGNVSEDTQSSGGNGQKGRETSSNTKKRKRNGQKNSEAAQSHRSQQSEEEPDNNGDEKRNDEQSPNSPGKKSNSGKQQGKQSSDPPKDGYIHVRARRGQATNSHSLAERVRREKISERMKFLQDLVPGCNKVTGKAVMLDEIINYVQSLQRQVEFLSMKLATVNPQMDFNLEGLLAKDALQLRAGSSSTTPFPPNMSMAYPPLPHGFMQQTLSSIGRTITSPLSPMNGGFKRQETNGWEGDLQNVIHINYGAGDVTPDPQAAATASLPAANMKVEP</sequence>
<name>BH049_ARATH</name>
<feature type="chain" id="PRO_0000358747" description="Transcription factor bHLH49">
    <location>
        <begin position="1"/>
        <end position="486"/>
    </location>
</feature>
<feature type="domain" description="bHLH" evidence="1">
    <location>
        <begin position="309"/>
        <end position="359"/>
    </location>
</feature>
<feature type="region of interest" description="Disordered" evidence="2">
    <location>
        <begin position="1"/>
        <end position="30"/>
    </location>
</feature>
<feature type="region of interest" description="Disordered" evidence="2">
    <location>
        <begin position="194"/>
        <end position="300"/>
    </location>
</feature>
<feature type="compositionally biased region" description="Basic and acidic residues" evidence="2">
    <location>
        <begin position="1"/>
        <end position="17"/>
    </location>
</feature>
<feature type="compositionally biased region" description="Polar residues" evidence="2">
    <location>
        <begin position="198"/>
        <end position="221"/>
    </location>
</feature>
<feature type="compositionally biased region" description="Polar residues" evidence="2">
    <location>
        <begin position="243"/>
        <end position="254"/>
    </location>
</feature>
<feature type="compositionally biased region" description="Low complexity" evidence="2">
    <location>
        <begin position="273"/>
        <end position="293"/>
    </location>
</feature>
<feature type="splice variant" id="VSP_036087" description="In isoform 2." evidence="5">
    <location>
        <position position="244"/>
    </location>
</feature>
<feature type="sequence conflict" description="In Ref. 1; AAM10942." evidence="5" ref="1">
    <original>Q</original>
    <variation>H</variation>
    <location>
        <position position="172"/>
    </location>
</feature>
<feature type="sequence conflict" description="In Ref. 1; AAM10942." evidence="5" ref="1">
    <original>K</original>
    <variation>E</variation>
    <location>
        <position position="205"/>
    </location>
</feature>
<feature type="sequence conflict" description="In Ref. 1; AAM10942." evidence="5" ref="1">
    <original>A</original>
    <variation>S</variation>
    <location>
        <position position="409"/>
    </location>
</feature>
<reference key="1">
    <citation type="journal article" date="2003" name="Mol. Biol. Evol.">
        <title>The basic helix-loop-helix transcription factor family in plants: a genome-wide study of protein structure and functional diversity.</title>
        <authorList>
            <person name="Heim M.A."/>
            <person name="Jakoby M."/>
            <person name="Werber M."/>
            <person name="Martin C."/>
            <person name="Weisshaar B."/>
            <person name="Bailey P.C."/>
        </authorList>
    </citation>
    <scope>NUCLEOTIDE SEQUENCE [MRNA] (ISOFORM 1)</scope>
    <scope>TISSUE SPECIFICITY</scope>
    <scope>GENE FAMILY</scope>
    <scope>NOMENCLATURE</scope>
    <source>
        <strain>cv. Columbia</strain>
        <tissue>Stem</tissue>
    </source>
</reference>
<reference key="2">
    <citation type="journal article" date="2000" name="Nature">
        <title>Sequence and analysis of chromosome 1 of the plant Arabidopsis thaliana.</title>
        <authorList>
            <person name="Theologis A."/>
            <person name="Ecker J.R."/>
            <person name="Palm C.J."/>
            <person name="Federspiel N.A."/>
            <person name="Kaul S."/>
            <person name="White O."/>
            <person name="Alonso J."/>
            <person name="Altafi H."/>
            <person name="Araujo R."/>
            <person name="Bowman C.L."/>
            <person name="Brooks S.Y."/>
            <person name="Buehler E."/>
            <person name="Chan A."/>
            <person name="Chao Q."/>
            <person name="Chen H."/>
            <person name="Cheuk R.F."/>
            <person name="Chin C.W."/>
            <person name="Chung M.K."/>
            <person name="Conn L."/>
            <person name="Conway A.B."/>
            <person name="Conway A.R."/>
            <person name="Creasy T.H."/>
            <person name="Dewar K."/>
            <person name="Dunn P."/>
            <person name="Etgu P."/>
            <person name="Feldblyum T.V."/>
            <person name="Feng J.-D."/>
            <person name="Fong B."/>
            <person name="Fujii C.Y."/>
            <person name="Gill J.E."/>
            <person name="Goldsmith A.D."/>
            <person name="Haas B."/>
            <person name="Hansen N.F."/>
            <person name="Hughes B."/>
            <person name="Huizar L."/>
            <person name="Hunter J.L."/>
            <person name="Jenkins J."/>
            <person name="Johnson-Hopson C."/>
            <person name="Khan S."/>
            <person name="Khaykin E."/>
            <person name="Kim C.J."/>
            <person name="Koo H.L."/>
            <person name="Kremenetskaia I."/>
            <person name="Kurtz D.B."/>
            <person name="Kwan A."/>
            <person name="Lam B."/>
            <person name="Langin-Hooper S."/>
            <person name="Lee A."/>
            <person name="Lee J.M."/>
            <person name="Lenz C.A."/>
            <person name="Li J.H."/>
            <person name="Li Y.-P."/>
            <person name="Lin X."/>
            <person name="Liu S.X."/>
            <person name="Liu Z.A."/>
            <person name="Luros J.S."/>
            <person name="Maiti R."/>
            <person name="Marziali A."/>
            <person name="Militscher J."/>
            <person name="Miranda M."/>
            <person name="Nguyen M."/>
            <person name="Nierman W.C."/>
            <person name="Osborne B.I."/>
            <person name="Pai G."/>
            <person name="Peterson J."/>
            <person name="Pham P.K."/>
            <person name="Rizzo M."/>
            <person name="Rooney T."/>
            <person name="Rowley D."/>
            <person name="Sakano H."/>
            <person name="Salzberg S.L."/>
            <person name="Schwartz J.R."/>
            <person name="Shinn P."/>
            <person name="Southwick A.M."/>
            <person name="Sun H."/>
            <person name="Tallon L.J."/>
            <person name="Tambunga G."/>
            <person name="Toriumi M.J."/>
            <person name="Town C.D."/>
            <person name="Utterback T."/>
            <person name="Van Aken S."/>
            <person name="Vaysberg M."/>
            <person name="Vysotskaia V.S."/>
            <person name="Walker M."/>
            <person name="Wu D."/>
            <person name="Yu G."/>
            <person name="Fraser C.M."/>
            <person name="Venter J.C."/>
            <person name="Davis R.W."/>
        </authorList>
    </citation>
    <scope>NUCLEOTIDE SEQUENCE [LARGE SCALE GENOMIC DNA]</scope>
    <source>
        <strain>cv. Columbia</strain>
    </source>
</reference>
<reference key="3">
    <citation type="journal article" date="2017" name="Plant J.">
        <title>Araport11: a complete reannotation of the Arabidopsis thaliana reference genome.</title>
        <authorList>
            <person name="Cheng C.Y."/>
            <person name="Krishnakumar V."/>
            <person name="Chan A.P."/>
            <person name="Thibaud-Nissen F."/>
            <person name="Schobel S."/>
            <person name="Town C.D."/>
        </authorList>
    </citation>
    <scope>GENOME REANNOTATION</scope>
    <source>
        <strain>cv. Columbia</strain>
    </source>
</reference>
<reference key="4">
    <citation type="journal article" date="2003" name="Science">
        <title>Empirical analysis of transcriptional activity in the Arabidopsis genome.</title>
        <authorList>
            <person name="Yamada K."/>
            <person name="Lim J."/>
            <person name="Dale J.M."/>
            <person name="Chen H."/>
            <person name="Shinn P."/>
            <person name="Palm C.J."/>
            <person name="Southwick A.M."/>
            <person name="Wu H.C."/>
            <person name="Kim C.J."/>
            <person name="Nguyen M."/>
            <person name="Pham P.K."/>
            <person name="Cheuk R.F."/>
            <person name="Karlin-Newmann G."/>
            <person name="Liu S.X."/>
            <person name="Lam B."/>
            <person name="Sakano H."/>
            <person name="Wu T."/>
            <person name="Yu G."/>
            <person name="Miranda M."/>
            <person name="Quach H.L."/>
            <person name="Tripp M."/>
            <person name="Chang C.H."/>
            <person name="Lee J.M."/>
            <person name="Toriumi M.J."/>
            <person name="Chan M.M."/>
            <person name="Tang C.C."/>
            <person name="Onodera C.S."/>
            <person name="Deng J.M."/>
            <person name="Akiyama K."/>
            <person name="Ansari Y."/>
            <person name="Arakawa T."/>
            <person name="Banh J."/>
            <person name="Banno F."/>
            <person name="Bowser L."/>
            <person name="Brooks S.Y."/>
            <person name="Carninci P."/>
            <person name="Chao Q."/>
            <person name="Choy N."/>
            <person name="Enju A."/>
            <person name="Goldsmith A.D."/>
            <person name="Gurjal M."/>
            <person name="Hansen N.F."/>
            <person name="Hayashizaki Y."/>
            <person name="Johnson-Hopson C."/>
            <person name="Hsuan V.W."/>
            <person name="Iida K."/>
            <person name="Karnes M."/>
            <person name="Khan S."/>
            <person name="Koesema E."/>
            <person name="Ishida J."/>
            <person name="Jiang P.X."/>
            <person name="Jones T."/>
            <person name="Kawai J."/>
            <person name="Kamiya A."/>
            <person name="Meyers C."/>
            <person name="Nakajima M."/>
            <person name="Narusaka M."/>
            <person name="Seki M."/>
            <person name="Sakurai T."/>
            <person name="Satou M."/>
            <person name="Tamse R."/>
            <person name="Vaysberg M."/>
            <person name="Wallender E.K."/>
            <person name="Wong C."/>
            <person name="Yamamura Y."/>
            <person name="Yuan S."/>
            <person name="Shinozaki K."/>
            <person name="Davis R.W."/>
            <person name="Theologis A."/>
            <person name="Ecker J.R."/>
        </authorList>
    </citation>
    <scope>NUCLEOTIDE SEQUENCE [LARGE SCALE MRNA] (ISOFORM 1)</scope>
    <source>
        <strain>cv. Columbia</strain>
    </source>
</reference>
<reference key="5">
    <citation type="journal article" date="2003" name="Plant Cell">
        <title>The Arabidopsis basic/helix-loop-helix transcription factor family.</title>
        <authorList>
            <person name="Toledo-Ortiz G."/>
            <person name="Huq E."/>
            <person name="Quail P.H."/>
        </authorList>
    </citation>
    <scope>GENE FAMILY</scope>
</reference>
<reference key="6">
    <citation type="journal article" date="2003" name="Plant Cell">
        <title>Update on the basic helix-loop-helix transcription factor gene family in Arabidopsis thaliana.</title>
        <authorList>
            <person name="Bailey P.C."/>
            <person name="Martin C."/>
            <person name="Toledo-Ortiz G."/>
            <person name="Quail P.H."/>
            <person name="Huq E."/>
            <person name="Heim M.A."/>
            <person name="Jakoby M."/>
            <person name="Werber M."/>
            <person name="Weisshaar B."/>
        </authorList>
    </citation>
    <scope>GENE FAMILY</scope>
    <scope>NOMENCLATURE</scope>
</reference>
<reference key="7">
    <citation type="journal article" date="2012" name="Plant Cell">
        <title>A triantagonistic basic helix-loop-helix system regulates cell elongation in Arabidopsis.</title>
        <authorList>
            <person name="Ikeda M."/>
            <person name="Fujiwara S."/>
            <person name="Mitsuda N."/>
            <person name="Ohme-Takagi M."/>
        </authorList>
    </citation>
    <scope>FUNCTION</scope>
    <scope>INTERACTION WITH IBH1</scope>
</reference>
<proteinExistence type="evidence at protein level"/>
<organism>
    <name type="scientific">Arabidopsis thaliana</name>
    <name type="common">Mouse-ear cress</name>
    <dbReference type="NCBI Taxonomy" id="3702"/>
    <lineage>
        <taxon>Eukaryota</taxon>
        <taxon>Viridiplantae</taxon>
        <taxon>Streptophyta</taxon>
        <taxon>Embryophyta</taxon>
        <taxon>Tracheophyta</taxon>
        <taxon>Spermatophyta</taxon>
        <taxon>Magnoliopsida</taxon>
        <taxon>eudicotyledons</taxon>
        <taxon>Gunneridae</taxon>
        <taxon>Pentapetalae</taxon>
        <taxon>rosids</taxon>
        <taxon>malvids</taxon>
        <taxon>Brassicales</taxon>
        <taxon>Brassicaceae</taxon>
        <taxon>Camelineae</taxon>
        <taxon>Arabidopsis</taxon>
    </lineage>
</organism>
<dbReference type="EMBL" id="AF488584">
    <property type="protein sequence ID" value="AAM10942.1"/>
    <property type="molecule type" value="mRNA"/>
</dbReference>
<dbReference type="EMBL" id="AC011665">
    <property type="protein sequence ID" value="AAG51583.1"/>
    <property type="molecule type" value="Genomic_DNA"/>
</dbReference>
<dbReference type="EMBL" id="CP002684">
    <property type="protein sequence ID" value="AEE34861.1"/>
    <property type="molecule type" value="Genomic_DNA"/>
</dbReference>
<dbReference type="EMBL" id="CP002684">
    <property type="protein sequence ID" value="AEE34862.1"/>
    <property type="molecule type" value="Genomic_DNA"/>
</dbReference>
<dbReference type="EMBL" id="CP002684">
    <property type="protein sequence ID" value="AEE34863.1"/>
    <property type="molecule type" value="Genomic_DNA"/>
</dbReference>
<dbReference type="EMBL" id="CP002684">
    <property type="protein sequence ID" value="ANM57902.1"/>
    <property type="molecule type" value="Genomic_DNA"/>
</dbReference>
<dbReference type="EMBL" id="AY128299">
    <property type="protein sequence ID" value="AAM91106.1"/>
    <property type="molecule type" value="mRNA"/>
</dbReference>
<dbReference type="EMBL" id="BT002259">
    <property type="protein sequence ID" value="AAN72270.1"/>
    <property type="molecule type" value="mRNA"/>
</dbReference>
<dbReference type="PIR" id="G96713">
    <property type="entry name" value="G96713"/>
</dbReference>
<dbReference type="RefSeq" id="NP_001031255.1">
    <molecule id="Q9CAA9-2"/>
    <property type="nucleotide sequence ID" value="NM_001036178.1"/>
</dbReference>
<dbReference type="RefSeq" id="NP_001320380.1">
    <molecule id="Q9CAA9-1"/>
    <property type="nucleotide sequence ID" value="NM_001334390.1"/>
</dbReference>
<dbReference type="RefSeq" id="NP_177058.1">
    <molecule id="Q9CAA9-1"/>
    <property type="nucleotide sequence ID" value="NM_105566.5"/>
</dbReference>
<dbReference type="RefSeq" id="NP_849863.2">
    <molecule id="Q9CAA9-1"/>
    <property type="nucleotide sequence ID" value="NM_179532.4"/>
</dbReference>
<dbReference type="SMR" id="Q9CAA9"/>
<dbReference type="BioGRID" id="28446">
    <property type="interactions" value="3"/>
</dbReference>
<dbReference type="FunCoup" id="Q9CAA9">
    <property type="interactions" value="1987"/>
</dbReference>
<dbReference type="IntAct" id="Q9CAA9">
    <property type="interactions" value="2"/>
</dbReference>
<dbReference type="STRING" id="3702.Q9CAA9"/>
<dbReference type="iPTMnet" id="Q9CAA9"/>
<dbReference type="PaxDb" id="3702-AT1G68920.1"/>
<dbReference type="ProteomicsDB" id="240433">
    <molecule id="Q9CAA9-1"/>
</dbReference>
<dbReference type="EnsemblPlants" id="AT1G68920.1">
    <molecule id="Q9CAA9-1"/>
    <property type="protein sequence ID" value="AT1G68920.1"/>
    <property type="gene ID" value="AT1G68920"/>
</dbReference>
<dbReference type="EnsemblPlants" id="AT1G68920.2">
    <molecule id="Q9CAA9-1"/>
    <property type="protein sequence ID" value="AT1G68920.2"/>
    <property type="gene ID" value="AT1G68920"/>
</dbReference>
<dbReference type="EnsemblPlants" id="AT1G68920.3">
    <molecule id="Q9CAA9-2"/>
    <property type="protein sequence ID" value="AT1G68920.3"/>
    <property type="gene ID" value="AT1G68920"/>
</dbReference>
<dbReference type="EnsemblPlants" id="AT1G68920.4">
    <molecule id="Q9CAA9-1"/>
    <property type="protein sequence ID" value="AT1G68920.4"/>
    <property type="gene ID" value="AT1G68920"/>
</dbReference>
<dbReference type="GeneID" id="843225"/>
<dbReference type="Gramene" id="AT1G68920.1">
    <molecule id="Q9CAA9-1"/>
    <property type="protein sequence ID" value="AT1G68920.1"/>
    <property type="gene ID" value="AT1G68920"/>
</dbReference>
<dbReference type="Gramene" id="AT1G68920.2">
    <molecule id="Q9CAA9-1"/>
    <property type="protein sequence ID" value="AT1G68920.2"/>
    <property type="gene ID" value="AT1G68920"/>
</dbReference>
<dbReference type="Gramene" id="AT1G68920.3">
    <molecule id="Q9CAA9-2"/>
    <property type="protein sequence ID" value="AT1G68920.3"/>
    <property type="gene ID" value="AT1G68920"/>
</dbReference>
<dbReference type="Gramene" id="AT1G68920.4">
    <molecule id="Q9CAA9-1"/>
    <property type="protein sequence ID" value="AT1G68920.4"/>
    <property type="gene ID" value="AT1G68920"/>
</dbReference>
<dbReference type="KEGG" id="ath:AT1G68920"/>
<dbReference type="Araport" id="AT1G68920"/>
<dbReference type="TAIR" id="AT1G68920">
    <property type="gene designation" value="CIL1"/>
</dbReference>
<dbReference type="eggNOG" id="ENOG502QT8I">
    <property type="taxonomic scope" value="Eukaryota"/>
</dbReference>
<dbReference type="InParanoid" id="Q9CAA9"/>
<dbReference type="OMA" id="SSQMMET"/>
<dbReference type="PhylomeDB" id="Q9CAA9"/>
<dbReference type="PRO" id="PR:Q9CAA9"/>
<dbReference type="Proteomes" id="UP000006548">
    <property type="component" value="Chromosome 1"/>
</dbReference>
<dbReference type="ExpressionAtlas" id="Q9CAA9">
    <property type="expression patterns" value="baseline and differential"/>
</dbReference>
<dbReference type="GO" id="GO:0005634">
    <property type="term" value="C:nucleus"/>
    <property type="evidence" value="ECO:0007669"/>
    <property type="project" value="UniProtKB-SubCell"/>
</dbReference>
<dbReference type="GO" id="GO:0003700">
    <property type="term" value="F:DNA-binding transcription factor activity"/>
    <property type="evidence" value="ECO:0000250"/>
    <property type="project" value="TAIR"/>
</dbReference>
<dbReference type="GO" id="GO:0046983">
    <property type="term" value="F:protein dimerization activity"/>
    <property type="evidence" value="ECO:0007669"/>
    <property type="project" value="InterPro"/>
</dbReference>
<dbReference type="GO" id="GO:0000976">
    <property type="term" value="F:transcription cis-regulatory region binding"/>
    <property type="evidence" value="ECO:0000353"/>
    <property type="project" value="TAIR"/>
</dbReference>
<dbReference type="GO" id="GO:0006355">
    <property type="term" value="P:regulation of DNA-templated transcription"/>
    <property type="evidence" value="ECO:0000304"/>
    <property type="project" value="TAIR"/>
</dbReference>
<dbReference type="CDD" id="cd18919">
    <property type="entry name" value="bHLH_AtBPE_like"/>
    <property type="match status" value="1"/>
</dbReference>
<dbReference type="FunFam" id="4.10.280.10:FF:000002">
    <property type="entry name" value="Basic helix-loop-helix transcription factor"/>
    <property type="match status" value="1"/>
</dbReference>
<dbReference type="Gene3D" id="4.10.280.10">
    <property type="entry name" value="Helix-loop-helix DNA-binding domain"/>
    <property type="match status" value="1"/>
</dbReference>
<dbReference type="InterPro" id="IPR011598">
    <property type="entry name" value="bHLH_dom"/>
</dbReference>
<dbReference type="InterPro" id="IPR024097">
    <property type="entry name" value="bHLH_ZIP_TF"/>
</dbReference>
<dbReference type="InterPro" id="IPR036638">
    <property type="entry name" value="HLH_DNA-bd_sf"/>
</dbReference>
<dbReference type="PANTHER" id="PTHR12565">
    <property type="entry name" value="STEROL REGULATORY ELEMENT-BINDING PROTEIN"/>
    <property type="match status" value="1"/>
</dbReference>
<dbReference type="PANTHER" id="PTHR12565:SF458">
    <property type="entry name" value="TRANSCRIPTION FACTOR BHLH49"/>
    <property type="match status" value="1"/>
</dbReference>
<dbReference type="Pfam" id="PF00010">
    <property type="entry name" value="HLH"/>
    <property type="match status" value="1"/>
</dbReference>
<dbReference type="SMART" id="SM00353">
    <property type="entry name" value="HLH"/>
    <property type="match status" value="1"/>
</dbReference>
<dbReference type="SUPFAM" id="SSF47459">
    <property type="entry name" value="HLH, helix-loop-helix DNA-binding domain"/>
    <property type="match status" value="1"/>
</dbReference>
<dbReference type="PROSITE" id="PS50888">
    <property type="entry name" value="BHLH"/>
    <property type="match status" value="1"/>
</dbReference>
<comment type="function">
    <text evidence="4">Transcriptional activator involved in cell elongation. Regulates the expression of a subset of genes involved in cell expansion by binding to the G-box motif.</text>
</comment>
<comment type="subunit">
    <text evidence="4 5">Homodimer (Probable). Interacts with IBH1.</text>
</comment>
<comment type="subcellular location">
    <subcellularLocation>
        <location evidence="1">Nucleus</location>
    </subcellularLocation>
</comment>
<comment type="alternative products">
    <event type="alternative splicing"/>
    <isoform>
        <id>Q9CAA9-1</id>
        <name>1</name>
        <sequence type="displayed"/>
    </isoform>
    <isoform>
        <id>Q9CAA9-2</id>
        <name>2</name>
        <sequence type="described" ref="VSP_036087"/>
    </isoform>
</comment>
<comment type="tissue specificity">
    <text evidence="3">Expressed constitutively in roots, stems, and flowers.</text>
</comment>
<comment type="miscellaneous">
    <text evidence="6">Plants over-expressing BHLH49 show increased hypocotyl and cotyledon lengths and increased flower size.</text>
</comment>
<comment type="miscellaneous">
    <molecule>Isoform 2</molecule>
    <text evidence="5">May be due to a competing acceptor splice site.</text>
</comment>
<accession>Q9CAA9</accession>
<accession>Q27GM6</accession>
<accession>Q3E6P7</accession>
<accession>Q8S3E7</accession>
<protein>
    <recommendedName>
        <fullName>Transcription factor bHLH49</fullName>
    </recommendedName>
    <alternativeName>
        <fullName>Basic helix-loop-helix protein 49</fullName>
        <shortName>AtbHLH49</shortName>
        <shortName>bHLH 49</shortName>
    </alternativeName>
    <alternativeName>
        <fullName>Protein ACTIVATOR FOR CELL ELONGATION 1</fullName>
    </alternativeName>
    <alternativeName>
        <fullName>Transcription factor EN 82</fullName>
    </alternativeName>
    <alternativeName>
        <fullName>bHLH transcription factor bHLH049</fullName>
    </alternativeName>
</protein>
<gene>
    <name type="primary">BHLH49</name>
    <name type="synonym">ACE1</name>
    <name type="synonym">EN82</name>
    <name type="ordered locus">At1g68920</name>
    <name type="ORF">T6L1.10</name>
</gene>
<keyword id="KW-0025">Alternative splicing</keyword>
<keyword id="KW-0238">DNA-binding</keyword>
<keyword id="KW-0341">Growth regulation</keyword>
<keyword id="KW-0539">Nucleus</keyword>
<keyword id="KW-1185">Reference proteome</keyword>
<keyword id="KW-0804">Transcription</keyword>
<keyword id="KW-0805">Transcription regulation</keyword>
<evidence type="ECO:0000255" key="1">
    <source>
        <dbReference type="PROSITE-ProRule" id="PRU00981"/>
    </source>
</evidence>
<evidence type="ECO:0000256" key="2">
    <source>
        <dbReference type="SAM" id="MobiDB-lite"/>
    </source>
</evidence>
<evidence type="ECO:0000269" key="3">
    <source>
    </source>
</evidence>
<evidence type="ECO:0000269" key="4">
    <source>
    </source>
</evidence>
<evidence type="ECO:0000305" key="5"/>
<evidence type="ECO:0000305" key="6">
    <source>
    </source>
</evidence>